<organism>
    <name type="scientific">Synechococcus sp. (strain WH7803)</name>
    <dbReference type="NCBI Taxonomy" id="32051"/>
    <lineage>
        <taxon>Bacteria</taxon>
        <taxon>Bacillati</taxon>
        <taxon>Cyanobacteriota</taxon>
        <taxon>Cyanophyceae</taxon>
        <taxon>Synechococcales</taxon>
        <taxon>Synechococcaceae</taxon>
        <taxon>Synechococcus</taxon>
    </lineage>
</organism>
<keyword id="KW-0963">Cytoplasm</keyword>
<keyword id="KW-0324">Glycolysis</keyword>
<keyword id="KW-0456">Lyase</keyword>
<keyword id="KW-0460">Magnesium</keyword>
<keyword id="KW-0479">Metal-binding</keyword>
<keyword id="KW-1185">Reference proteome</keyword>
<keyword id="KW-0964">Secreted</keyword>
<feature type="chain" id="PRO_1000019256" description="Enolase">
    <location>
        <begin position="1"/>
        <end position="430"/>
    </location>
</feature>
<feature type="active site" description="Proton donor" evidence="1">
    <location>
        <position position="209"/>
    </location>
</feature>
<feature type="active site" description="Proton acceptor" evidence="1">
    <location>
        <position position="338"/>
    </location>
</feature>
<feature type="binding site" evidence="1">
    <location>
        <position position="167"/>
    </location>
    <ligand>
        <name>(2R)-2-phosphoglycerate</name>
        <dbReference type="ChEBI" id="CHEBI:58289"/>
    </ligand>
</feature>
<feature type="binding site" evidence="1">
    <location>
        <position position="245"/>
    </location>
    <ligand>
        <name>Mg(2+)</name>
        <dbReference type="ChEBI" id="CHEBI:18420"/>
    </ligand>
</feature>
<feature type="binding site" evidence="1">
    <location>
        <position position="286"/>
    </location>
    <ligand>
        <name>Mg(2+)</name>
        <dbReference type="ChEBI" id="CHEBI:18420"/>
    </ligand>
</feature>
<feature type="binding site" evidence="1">
    <location>
        <position position="313"/>
    </location>
    <ligand>
        <name>Mg(2+)</name>
        <dbReference type="ChEBI" id="CHEBI:18420"/>
    </ligand>
</feature>
<feature type="binding site" evidence="1">
    <location>
        <position position="338"/>
    </location>
    <ligand>
        <name>(2R)-2-phosphoglycerate</name>
        <dbReference type="ChEBI" id="CHEBI:58289"/>
    </ligand>
</feature>
<feature type="binding site" evidence="1">
    <location>
        <position position="367"/>
    </location>
    <ligand>
        <name>(2R)-2-phosphoglycerate</name>
        <dbReference type="ChEBI" id="CHEBI:58289"/>
    </ligand>
</feature>
<feature type="binding site" evidence="1">
    <location>
        <position position="368"/>
    </location>
    <ligand>
        <name>(2R)-2-phosphoglycerate</name>
        <dbReference type="ChEBI" id="CHEBI:58289"/>
    </ligand>
</feature>
<feature type="binding site" evidence="1">
    <location>
        <position position="389"/>
    </location>
    <ligand>
        <name>(2R)-2-phosphoglycerate</name>
        <dbReference type="ChEBI" id="CHEBI:58289"/>
    </ligand>
</feature>
<proteinExistence type="inferred from homology"/>
<dbReference type="EC" id="4.2.1.11" evidence="1"/>
<dbReference type="EMBL" id="CT971583">
    <property type="protein sequence ID" value="CAK24805.1"/>
    <property type="molecule type" value="Genomic_DNA"/>
</dbReference>
<dbReference type="SMR" id="A5GPE0"/>
<dbReference type="STRING" id="32051.SynWH7803_2379"/>
<dbReference type="KEGG" id="syx:SynWH7803_2379"/>
<dbReference type="eggNOG" id="COG0148">
    <property type="taxonomic scope" value="Bacteria"/>
</dbReference>
<dbReference type="HOGENOM" id="CLU_031223_2_1_3"/>
<dbReference type="OrthoDB" id="9804716at2"/>
<dbReference type="UniPathway" id="UPA00109">
    <property type="reaction ID" value="UER00187"/>
</dbReference>
<dbReference type="Proteomes" id="UP000001566">
    <property type="component" value="Chromosome"/>
</dbReference>
<dbReference type="GO" id="GO:0009986">
    <property type="term" value="C:cell surface"/>
    <property type="evidence" value="ECO:0007669"/>
    <property type="project" value="UniProtKB-SubCell"/>
</dbReference>
<dbReference type="GO" id="GO:0005576">
    <property type="term" value="C:extracellular region"/>
    <property type="evidence" value="ECO:0007669"/>
    <property type="project" value="UniProtKB-SubCell"/>
</dbReference>
<dbReference type="GO" id="GO:0000015">
    <property type="term" value="C:phosphopyruvate hydratase complex"/>
    <property type="evidence" value="ECO:0007669"/>
    <property type="project" value="InterPro"/>
</dbReference>
<dbReference type="GO" id="GO:0000287">
    <property type="term" value="F:magnesium ion binding"/>
    <property type="evidence" value="ECO:0007669"/>
    <property type="project" value="UniProtKB-UniRule"/>
</dbReference>
<dbReference type="GO" id="GO:0004634">
    <property type="term" value="F:phosphopyruvate hydratase activity"/>
    <property type="evidence" value="ECO:0007669"/>
    <property type="project" value="UniProtKB-UniRule"/>
</dbReference>
<dbReference type="GO" id="GO:0006096">
    <property type="term" value="P:glycolytic process"/>
    <property type="evidence" value="ECO:0007669"/>
    <property type="project" value="UniProtKB-UniRule"/>
</dbReference>
<dbReference type="CDD" id="cd03313">
    <property type="entry name" value="enolase"/>
    <property type="match status" value="1"/>
</dbReference>
<dbReference type="FunFam" id="3.20.20.120:FF:000001">
    <property type="entry name" value="Enolase"/>
    <property type="match status" value="1"/>
</dbReference>
<dbReference type="FunFam" id="3.30.390.10:FF:000001">
    <property type="entry name" value="Enolase"/>
    <property type="match status" value="1"/>
</dbReference>
<dbReference type="Gene3D" id="3.20.20.120">
    <property type="entry name" value="Enolase-like C-terminal domain"/>
    <property type="match status" value="1"/>
</dbReference>
<dbReference type="Gene3D" id="3.30.390.10">
    <property type="entry name" value="Enolase-like, N-terminal domain"/>
    <property type="match status" value="1"/>
</dbReference>
<dbReference type="HAMAP" id="MF_00318">
    <property type="entry name" value="Enolase"/>
    <property type="match status" value="1"/>
</dbReference>
<dbReference type="InterPro" id="IPR000941">
    <property type="entry name" value="Enolase"/>
</dbReference>
<dbReference type="InterPro" id="IPR036849">
    <property type="entry name" value="Enolase-like_C_sf"/>
</dbReference>
<dbReference type="InterPro" id="IPR029017">
    <property type="entry name" value="Enolase-like_N"/>
</dbReference>
<dbReference type="InterPro" id="IPR020810">
    <property type="entry name" value="Enolase_C"/>
</dbReference>
<dbReference type="InterPro" id="IPR020809">
    <property type="entry name" value="Enolase_CS"/>
</dbReference>
<dbReference type="InterPro" id="IPR020811">
    <property type="entry name" value="Enolase_N"/>
</dbReference>
<dbReference type="NCBIfam" id="TIGR01060">
    <property type="entry name" value="eno"/>
    <property type="match status" value="1"/>
</dbReference>
<dbReference type="PANTHER" id="PTHR11902">
    <property type="entry name" value="ENOLASE"/>
    <property type="match status" value="1"/>
</dbReference>
<dbReference type="PANTHER" id="PTHR11902:SF1">
    <property type="entry name" value="ENOLASE"/>
    <property type="match status" value="1"/>
</dbReference>
<dbReference type="Pfam" id="PF00113">
    <property type="entry name" value="Enolase_C"/>
    <property type="match status" value="1"/>
</dbReference>
<dbReference type="Pfam" id="PF03952">
    <property type="entry name" value="Enolase_N"/>
    <property type="match status" value="1"/>
</dbReference>
<dbReference type="PIRSF" id="PIRSF001400">
    <property type="entry name" value="Enolase"/>
    <property type="match status" value="1"/>
</dbReference>
<dbReference type="PRINTS" id="PR00148">
    <property type="entry name" value="ENOLASE"/>
</dbReference>
<dbReference type="SFLD" id="SFLDS00001">
    <property type="entry name" value="Enolase"/>
    <property type="match status" value="1"/>
</dbReference>
<dbReference type="SFLD" id="SFLDF00002">
    <property type="entry name" value="enolase"/>
    <property type="match status" value="1"/>
</dbReference>
<dbReference type="SMART" id="SM01192">
    <property type="entry name" value="Enolase_C"/>
    <property type="match status" value="1"/>
</dbReference>
<dbReference type="SMART" id="SM01193">
    <property type="entry name" value="Enolase_N"/>
    <property type="match status" value="1"/>
</dbReference>
<dbReference type="SUPFAM" id="SSF51604">
    <property type="entry name" value="Enolase C-terminal domain-like"/>
    <property type="match status" value="1"/>
</dbReference>
<dbReference type="SUPFAM" id="SSF54826">
    <property type="entry name" value="Enolase N-terminal domain-like"/>
    <property type="match status" value="1"/>
</dbReference>
<dbReference type="PROSITE" id="PS00164">
    <property type="entry name" value="ENOLASE"/>
    <property type="match status" value="1"/>
</dbReference>
<sequence length="430" mass="45189">MFDSLDLVIDTIVAREVLDSRGNPTVEAEVLLEGGASGRAIVPSGASTGAHEAHELRDGGDRYMGKGVIQAVNHIEERIAPALCGLSALDQAAVDAAMLELDGSDNKSSLGANAILAVSMANARAAANGLGLPLYRYLGGPMATLLPVPLMNVINGGAHAANSLDFQEFMLVPHGAPSFREALRMGTEVFHTLKKLLSAKGMSTAVGDEGGFAPDLGNVEAGEILVEAIEKAGYKPGEQISLALDVASTEFFADGRYAFDGGSYDSAEMVGQLEKLVEQFPIVSIEDGLAEDDWEGWKLLTERLGSKVQLVGDDLFVTNTKRLQQGIDSSTANSILIKVNQIGSLTETLQAIDLAGRSGYTSVISHRSGETEDTTIADLSVATRAGQIKTGSLSRSERVAKYNQLLRIEDELGSQAVYAGAVGQGPRGNA</sequence>
<evidence type="ECO:0000255" key="1">
    <source>
        <dbReference type="HAMAP-Rule" id="MF_00318"/>
    </source>
</evidence>
<protein>
    <recommendedName>
        <fullName evidence="1">Enolase</fullName>
        <ecNumber evidence="1">4.2.1.11</ecNumber>
    </recommendedName>
    <alternativeName>
        <fullName evidence="1">2-phospho-D-glycerate hydro-lyase</fullName>
    </alternativeName>
    <alternativeName>
        <fullName evidence="1">2-phosphoglycerate dehydratase</fullName>
    </alternativeName>
</protein>
<gene>
    <name evidence="1" type="primary">eno</name>
    <name type="ordered locus">SynWH7803_2379</name>
</gene>
<reference key="1">
    <citation type="submission" date="2006-05" db="EMBL/GenBank/DDBJ databases">
        <authorList>
            <consortium name="Genoscope"/>
        </authorList>
    </citation>
    <scope>NUCLEOTIDE SEQUENCE [LARGE SCALE GENOMIC DNA]</scope>
    <source>
        <strain>WH7803</strain>
    </source>
</reference>
<name>ENO_SYNPW</name>
<accession>A5GPE0</accession>
<comment type="function">
    <text evidence="1">Catalyzes the reversible conversion of 2-phosphoglycerate (2-PG) into phosphoenolpyruvate (PEP). It is essential for the degradation of carbohydrates via glycolysis.</text>
</comment>
<comment type="catalytic activity">
    <reaction evidence="1">
        <text>(2R)-2-phosphoglycerate = phosphoenolpyruvate + H2O</text>
        <dbReference type="Rhea" id="RHEA:10164"/>
        <dbReference type="ChEBI" id="CHEBI:15377"/>
        <dbReference type="ChEBI" id="CHEBI:58289"/>
        <dbReference type="ChEBI" id="CHEBI:58702"/>
        <dbReference type="EC" id="4.2.1.11"/>
    </reaction>
</comment>
<comment type="cofactor">
    <cofactor evidence="1">
        <name>Mg(2+)</name>
        <dbReference type="ChEBI" id="CHEBI:18420"/>
    </cofactor>
    <text evidence="1">Binds a second Mg(2+) ion via substrate during catalysis.</text>
</comment>
<comment type="pathway">
    <text evidence="1">Carbohydrate degradation; glycolysis; pyruvate from D-glyceraldehyde 3-phosphate: step 4/5.</text>
</comment>
<comment type="subcellular location">
    <subcellularLocation>
        <location evidence="1">Cytoplasm</location>
    </subcellularLocation>
    <subcellularLocation>
        <location evidence="1">Secreted</location>
    </subcellularLocation>
    <subcellularLocation>
        <location evidence="1">Cell surface</location>
    </subcellularLocation>
    <text evidence="1">Fractions of enolase are present in both the cytoplasm and on the cell surface.</text>
</comment>
<comment type="similarity">
    <text evidence="1">Belongs to the enolase family.</text>
</comment>